<dbReference type="EC" id="7.6.2.-" evidence="1"/>
<dbReference type="EMBL" id="CP000108">
    <property type="protein sequence ID" value="ABB27540.1"/>
    <property type="molecule type" value="Genomic_DNA"/>
</dbReference>
<dbReference type="SMR" id="Q3ATY5"/>
<dbReference type="STRING" id="340177.Cag_0264"/>
<dbReference type="KEGG" id="cch:Cag_0264"/>
<dbReference type="eggNOG" id="COG1136">
    <property type="taxonomic scope" value="Bacteria"/>
</dbReference>
<dbReference type="HOGENOM" id="CLU_000604_1_22_10"/>
<dbReference type="OrthoDB" id="9769100at2"/>
<dbReference type="GO" id="GO:0005886">
    <property type="term" value="C:plasma membrane"/>
    <property type="evidence" value="ECO:0007669"/>
    <property type="project" value="UniProtKB-SubCell"/>
</dbReference>
<dbReference type="GO" id="GO:0005524">
    <property type="term" value="F:ATP binding"/>
    <property type="evidence" value="ECO:0007669"/>
    <property type="project" value="UniProtKB-KW"/>
</dbReference>
<dbReference type="GO" id="GO:0016887">
    <property type="term" value="F:ATP hydrolysis activity"/>
    <property type="evidence" value="ECO:0007669"/>
    <property type="project" value="InterPro"/>
</dbReference>
<dbReference type="CDD" id="cd03255">
    <property type="entry name" value="ABC_MJ0796_LolCDE_FtsE"/>
    <property type="match status" value="1"/>
</dbReference>
<dbReference type="FunFam" id="3.40.50.300:FF:000032">
    <property type="entry name" value="Export ABC transporter ATP-binding protein"/>
    <property type="match status" value="1"/>
</dbReference>
<dbReference type="Gene3D" id="3.40.50.300">
    <property type="entry name" value="P-loop containing nucleotide triphosphate hydrolases"/>
    <property type="match status" value="1"/>
</dbReference>
<dbReference type="InterPro" id="IPR003593">
    <property type="entry name" value="AAA+_ATPase"/>
</dbReference>
<dbReference type="InterPro" id="IPR003439">
    <property type="entry name" value="ABC_transporter-like_ATP-bd"/>
</dbReference>
<dbReference type="InterPro" id="IPR017871">
    <property type="entry name" value="ABC_transporter-like_CS"/>
</dbReference>
<dbReference type="InterPro" id="IPR017911">
    <property type="entry name" value="MacB-like_ATP-bd"/>
</dbReference>
<dbReference type="InterPro" id="IPR027417">
    <property type="entry name" value="P-loop_NTPase"/>
</dbReference>
<dbReference type="PANTHER" id="PTHR42798:SF2">
    <property type="entry name" value="ABC TRANSPORTER ATP-BINDING PROTEIN MG467-RELATED"/>
    <property type="match status" value="1"/>
</dbReference>
<dbReference type="PANTHER" id="PTHR42798">
    <property type="entry name" value="LIPOPROTEIN-RELEASING SYSTEM ATP-BINDING PROTEIN LOLD"/>
    <property type="match status" value="1"/>
</dbReference>
<dbReference type="Pfam" id="PF00005">
    <property type="entry name" value="ABC_tran"/>
    <property type="match status" value="1"/>
</dbReference>
<dbReference type="SMART" id="SM00382">
    <property type="entry name" value="AAA"/>
    <property type="match status" value="1"/>
</dbReference>
<dbReference type="SUPFAM" id="SSF52540">
    <property type="entry name" value="P-loop containing nucleoside triphosphate hydrolases"/>
    <property type="match status" value="1"/>
</dbReference>
<dbReference type="PROSITE" id="PS00211">
    <property type="entry name" value="ABC_TRANSPORTER_1"/>
    <property type="match status" value="1"/>
</dbReference>
<dbReference type="PROSITE" id="PS50893">
    <property type="entry name" value="ABC_TRANSPORTER_2"/>
    <property type="match status" value="1"/>
</dbReference>
<dbReference type="PROSITE" id="PS51244">
    <property type="entry name" value="LOLD"/>
    <property type="match status" value="1"/>
</dbReference>
<comment type="function">
    <text evidence="1">Part of the ABC transporter complex LolCDE involved in the translocation of mature outer membrane-directed lipoproteins, from the inner membrane to the periplasmic chaperone, LolA. Responsible for the formation of the LolA-lipoprotein complex in an ATP-dependent manner.</text>
</comment>
<comment type="subunit">
    <text evidence="1">The complex is composed of two ATP-binding proteins (LolD) and two transmembrane proteins (LolC and LolE).</text>
</comment>
<comment type="subcellular location">
    <subcellularLocation>
        <location evidence="1">Cell inner membrane</location>
        <topology evidence="1">Peripheral membrane protein</topology>
    </subcellularLocation>
</comment>
<comment type="similarity">
    <text evidence="1">Belongs to the ABC transporter superfamily. Lipoprotein translocase (TC 3.A.1.125) family.</text>
</comment>
<name>LOLD1_CHLCH</name>
<organism>
    <name type="scientific">Chlorobium chlorochromatii (strain CaD3)</name>
    <dbReference type="NCBI Taxonomy" id="340177"/>
    <lineage>
        <taxon>Bacteria</taxon>
        <taxon>Pseudomonadati</taxon>
        <taxon>Chlorobiota</taxon>
        <taxon>Chlorobiia</taxon>
        <taxon>Chlorobiales</taxon>
        <taxon>Chlorobiaceae</taxon>
        <taxon>Chlorobium/Pelodictyon group</taxon>
        <taxon>Chlorobium</taxon>
    </lineage>
</organism>
<feature type="chain" id="PRO_0000272069" description="Lipoprotein-releasing system ATP-binding protein LolD 1">
    <location>
        <begin position="1"/>
        <end position="246"/>
    </location>
</feature>
<feature type="domain" description="ABC transporter" evidence="1">
    <location>
        <begin position="6"/>
        <end position="244"/>
    </location>
</feature>
<feature type="binding site" evidence="1">
    <location>
        <begin position="43"/>
        <end position="50"/>
    </location>
    <ligand>
        <name>ATP</name>
        <dbReference type="ChEBI" id="CHEBI:30616"/>
    </ligand>
</feature>
<keyword id="KW-0067">ATP-binding</keyword>
<keyword id="KW-0997">Cell inner membrane</keyword>
<keyword id="KW-1003">Cell membrane</keyword>
<keyword id="KW-0472">Membrane</keyword>
<keyword id="KW-0547">Nucleotide-binding</keyword>
<keyword id="KW-1278">Translocase</keyword>
<keyword id="KW-0813">Transport</keyword>
<proteinExistence type="inferred from homology"/>
<protein>
    <recommendedName>
        <fullName evidence="1">Lipoprotein-releasing system ATP-binding protein LolD 1</fullName>
        <ecNumber evidence="1">7.6.2.-</ecNumber>
    </recommendedName>
</protein>
<gene>
    <name evidence="1" type="primary">lolD1</name>
    <name type="ordered locus">Cag_0264</name>
</gene>
<sequence>MPNTILKLERIRKDLELSRSIRQTIIPNLSLSIERGEFVTITGPSGSGKSTLLYLMGGLDKPTSGSVWLDGDELTAKNESEMNRIRNEKIGFIYQFHFLLPEFTAVENVSMPMLINGRRSRKEIRDRAMMLLDLVELQDKYTNKPNQMSGGQQQRVAIARALANEPKVLLGDEPTGNLDSRSANNVYQLFDRLNRELQQTIIVVTHDEAFANRASRRIHLVDGQVAYDRQLRTEASVTNEAASLVS</sequence>
<reference key="1">
    <citation type="submission" date="2005-08" db="EMBL/GenBank/DDBJ databases">
        <title>Complete sequence of Chlorobium chlorochromatii CaD3.</title>
        <authorList>
            <consortium name="US DOE Joint Genome Institute"/>
            <person name="Copeland A."/>
            <person name="Lucas S."/>
            <person name="Lapidus A."/>
            <person name="Barry K."/>
            <person name="Detter J.C."/>
            <person name="Glavina T."/>
            <person name="Hammon N."/>
            <person name="Israni S."/>
            <person name="Pitluck S."/>
            <person name="Bryant D."/>
            <person name="Schmutz J."/>
            <person name="Larimer F."/>
            <person name="Land M."/>
            <person name="Kyrpides N."/>
            <person name="Ivanova N."/>
            <person name="Richardson P."/>
        </authorList>
    </citation>
    <scope>NUCLEOTIDE SEQUENCE [LARGE SCALE GENOMIC DNA]</scope>
    <source>
        <strain>CaD3</strain>
    </source>
</reference>
<accession>Q3ATY5</accession>
<evidence type="ECO:0000255" key="1">
    <source>
        <dbReference type="HAMAP-Rule" id="MF_01708"/>
    </source>
</evidence>